<gene>
    <name evidence="1" type="primary">psb30</name>
    <name evidence="1" type="synonym">ycf12</name>
    <name type="ordered locus">tsr1242</name>
</gene>
<proteinExistence type="evidence at protein level"/>
<comment type="function">
    <text evidence="5 6 7 10">A core subunit of photosystem II (PSII). PSII is a light-driven water plastoquinone oxidoreductase, using light energy to abstract electrons from H(2)O, generating a proton gradient subsequently used for ATP formation. Helps stabilize PSII (PubMed:20359460).</text>
</comment>
<comment type="cofactor">
    <text evidence="2 3 4 6 7 8 9 10 11">PSII binds multiple chlorophylls, carotenoids and specific lipids.</text>
</comment>
<comment type="subunit">
    <text evidence="1 2 3 4 6 7 8 9 10 11 12">PSII is composed of 1 copy each of membrane proteins PsbA, PsbB, PsbC, PsbD, PsbE, PsbF, PsbH, PsbI, PsbJ, PsbK, PsbL, PsbM, PsbT, PsbX, PsbY, PsbZ, Psb30/Ycf12, peripheral proteins PsbO, CyanoQ (PsbQ), PsbU, PsbV and a large number of cofactors. It forms dimeric complexes. Part of a photosystem II (PSII) assembly intermediate complex PSII-I; crystallized from a strain deleted of psbJ, it forms monomeric PSII before addition of the oxygen evolving complex. PSII-I includes 3 assembly factors not found in mature PSII (Psb27, Psb28 and Psb34) (PubMed:33846594).</text>
</comment>
<comment type="subcellular location">
    <subcellularLocation>
        <location evidence="1 2 3 4 6 7 8 9 10 11 12">Cellular thylakoid membrane</location>
        <topology evidence="1 2 3 4 6 7 8 9 10 11 12">Single-pass membrane protein</topology>
    </subcellularLocation>
</comment>
<comment type="mass spectrometry" mass="5068.0" error="2.0" method="MALDI" evidence="4"/>
<comment type="mass spectrometry" mass="5067.0" method="MALDI" evidence="6"/>
<comment type="disruption phenotype">
    <text evidence="5">No visible growth effect at 10 umol or 60 umol photons/m(2)/s, loss of the PsbY subunit from PSII, no change in O(2) evolution under medium light, increased susceptibility to photodamage, cytochrome b559 (PsbE and PsbF) is in a low potential state in isolated thylakoids.</text>
</comment>
<comment type="similarity">
    <text evidence="1">Belongs to the Psb30/Ycf12 family.</text>
</comment>
<sequence length="46" mass="5037">MGIFNGIIEFLSNINFEVIAQLTMIAMIGIAGPMIIFLLAVRRGNL</sequence>
<name>PSB30_THEVB</name>
<organism>
    <name type="scientific">Thermosynechococcus vestitus (strain NIES-2133 / IAM M-273 / BP-1)</name>
    <dbReference type="NCBI Taxonomy" id="197221"/>
    <lineage>
        <taxon>Bacteria</taxon>
        <taxon>Bacillati</taxon>
        <taxon>Cyanobacteriota</taxon>
        <taxon>Cyanophyceae</taxon>
        <taxon>Acaryochloridales</taxon>
        <taxon>Thermosynechococcaceae</taxon>
        <taxon>Thermosynechococcus</taxon>
    </lineage>
</organism>
<keyword id="KW-0002">3D-structure</keyword>
<keyword id="KW-0903">Direct protein sequencing</keyword>
<keyword id="KW-0291">Formylation</keyword>
<keyword id="KW-0472">Membrane</keyword>
<keyword id="KW-0602">Photosynthesis</keyword>
<keyword id="KW-0604">Photosystem II</keyword>
<keyword id="KW-1185">Reference proteome</keyword>
<keyword id="KW-0793">Thylakoid</keyword>
<keyword id="KW-0812">Transmembrane</keyword>
<keyword id="KW-1133">Transmembrane helix</keyword>
<dbReference type="EMBL" id="BA000039">
    <property type="protein sequence ID" value="BAC08794.1"/>
    <property type="molecule type" value="Genomic_DNA"/>
</dbReference>
<dbReference type="RefSeq" id="NP_682032.1">
    <property type="nucleotide sequence ID" value="NC_004113.1"/>
</dbReference>
<dbReference type="RefSeq" id="WP_011057084.1">
    <property type="nucleotide sequence ID" value="NC_004113.1"/>
</dbReference>
<dbReference type="PDB" id="3KZI">
    <property type="method" value="X-ray"/>
    <property type="resolution" value="3.60 A"/>
    <property type="chains" value="y=1-46"/>
</dbReference>
<dbReference type="PDB" id="4FBY">
    <property type="method" value="X-ray"/>
    <property type="resolution" value="6.56 A"/>
    <property type="chains" value="m/y=1-46"/>
</dbReference>
<dbReference type="PDB" id="4IXQ">
    <property type="method" value="X-ray"/>
    <property type="resolution" value="5.70 A"/>
    <property type="chains" value="g/y=1-46"/>
</dbReference>
<dbReference type="PDB" id="4IXR">
    <property type="method" value="X-ray"/>
    <property type="resolution" value="5.90 A"/>
    <property type="chains" value="g/y=1-46"/>
</dbReference>
<dbReference type="PDB" id="4PBU">
    <property type="method" value="X-ray"/>
    <property type="resolution" value="5.00 A"/>
    <property type="chains" value="Y/y=18-46"/>
</dbReference>
<dbReference type="PDB" id="4PJ0">
    <property type="method" value="X-ray"/>
    <property type="resolution" value="2.44 A"/>
    <property type="chains" value="Y/y=1-46"/>
</dbReference>
<dbReference type="PDB" id="4RVY">
    <property type="method" value="X-ray"/>
    <property type="resolution" value="5.50 A"/>
    <property type="chains" value="Y/y=18-46"/>
</dbReference>
<dbReference type="PDB" id="4TNH">
    <property type="method" value="X-ray"/>
    <property type="resolution" value="4.90 A"/>
    <property type="chains" value="g/y=1-46"/>
</dbReference>
<dbReference type="PDB" id="4TNI">
    <property type="method" value="X-ray"/>
    <property type="resolution" value="4.60 A"/>
    <property type="chains" value="g/y=1-46"/>
</dbReference>
<dbReference type="PDB" id="4TNJ">
    <property type="method" value="X-ray"/>
    <property type="resolution" value="4.50 A"/>
    <property type="chains" value="g/y=1-46"/>
</dbReference>
<dbReference type="PDB" id="4TNK">
    <property type="method" value="X-ray"/>
    <property type="resolution" value="5.20 A"/>
    <property type="chains" value="g/y=1-46"/>
</dbReference>
<dbReference type="PDB" id="4V62">
    <property type="method" value="X-ray"/>
    <property type="resolution" value="2.90 A"/>
    <property type="chains" value="Ay/By=1-46"/>
</dbReference>
<dbReference type="PDB" id="4V82">
    <property type="method" value="X-ray"/>
    <property type="resolution" value="3.20 A"/>
    <property type="chains" value="Ay/By=1-46"/>
</dbReference>
<dbReference type="PDB" id="5E79">
    <property type="method" value="X-ray"/>
    <property type="resolution" value="3.50 A"/>
    <property type="chains" value="Y/y=18-46"/>
</dbReference>
<dbReference type="PDB" id="5E7C">
    <property type="method" value="X-ray"/>
    <property type="resolution" value="4.50 A"/>
    <property type="chains" value="Y/y=18-46"/>
</dbReference>
<dbReference type="PDB" id="5H2F">
    <property type="method" value="X-ray"/>
    <property type="resolution" value="2.20 A"/>
    <property type="chains" value="Y/y=18-46"/>
</dbReference>
<dbReference type="PDB" id="5KAF">
    <property type="method" value="X-ray"/>
    <property type="resolution" value="3.00 A"/>
    <property type="chains" value="Y/y=1-46"/>
</dbReference>
<dbReference type="PDB" id="5KAI">
    <property type="method" value="X-ray"/>
    <property type="resolution" value="2.80 A"/>
    <property type="chains" value="Y/y=1-46"/>
</dbReference>
<dbReference type="PDB" id="5MX2">
    <property type="method" value="X-ray"/>
    <property type="resolution" value="2.20 A"/>
    <property type="chains" value="Y/y=1-46"/>
</dbReference>
<dbReference type="PDB" id="5TIS">
    <property type="method" value="X-ray"/>
    <property type="resolution" value="2.25 A"/>
    <property type="chains" value="Y/y=1-46"/>
</dbReference>
<dbReference type="PDB" id="5ZZN">
    <property type="method" value="X-ray"/>
    <property type="resolution" value="2.10 A"/>
    <property type="chains" value="Y/y=18-46"/>
</dbReference>
<dbReference type="PDB" id="6DHE">
    <property type="method" value="X-ray"/>
    <property type="resolution" value="2.05 A"/>
    <property type="chains" value="Y/y=17-46"/>
</dbReference>
<dbReference type="PDB" id="6DHF">
    <property type="method" value="X-ray"/>
    <property type="resolution" value="2.08 A"/>
    <property type="chains" value="Y/y=17-46"/>
</dbReference>
<dbReference type="PDB" id="6DHG">
    <property type="method" value="X-ray"/>
    <property type="resolution" value="2.50 A"/>
    <property type="chains" value="Y/y=17-46"/>
</dbReference>
<dbReference type="PDB" id="6DHH">
    <property type="method" value="X-ray"/>
    <property type="resolution" value="2.20 A"/>
    <property type="chains" value="Y/y=17-46"/>
</dbReference>
<dbReference type="PDB" id="6DHO">
    <property type="method" value="X-ray"/>
    <property type="resolution" value="2.07 A"/>
    <property type="chains" value="Y/y=17-46"/>
</dbReference>
<dbReference type="PDB" id="6DHP">
    <property type="method" value="X-ray"/>
    <property type="resolution" value="2.04 A"/>
    <property type="chains" value="Y/y=17-46"/>
</dbReference>
<dbReference type="PDB" id="6W1O">
    <property type="method" value="X-ray"/>
    <property type="resolution" value="2.08 A"/>
    <property type="chains" value="Y/y=1-46"/>
</dbReference>
<dbReference type="PDB" id="6W1P">
    <property type="method" value="X-ray"/>
    <property type="resolution" value="2.26 A"/>
    <property type="chains" value="Y/y=1-46"/>
</dbReference>
<dbReference type="PDB" id="6W1Q">
    <property type="method" value="X-ray"/>
    <property type="resolution" value="2.27 A"/>
    <property type="chains" value="Y/y=1-46"/>
</dbReference>
<dbReference type="PDB" id="6W1R">
    <property type="method" value="X-ray"/>
    <property type="resolution" value="2.23 A"/>
    <property type="chains" value="Y/y=1-46"/>
</dbReference>
<dbReference type="PDB" id="6W1T">
    <property type="method" value="X-ray"/>
    <property type="resolution" value="2.01 A"/>
    <property type="chains" value="Y/y=1-46"/>
</dbReference>
<dbReference type="PDB" id="6W1U">
    <property type="method" value="X-ray"/>
    <property type="resolution" value="2.09 A"/>
    <property type="chains" value="Y/y=1-46"/>
</dbReference>
<dbReference type="PDB" id="6W1V">
    <property type="method" value="X-ray"/>
    <property type="resolution" value="2.09 A"/>
    <property type="chains" value="Y/y=1-46"/>
</dbReference>
<dbReference type="PDB" id="7NHO">
    <property type="method" value="EM"/>
    <property type="resolution" value="2.66 A"/>
    <property type="chains" value="y=1-46"/>
</dbReference>
<dbReference type="PDB" id="7NHP">
    <property type="method" value="EM"/>
    <property type="resolution" value="2.72 A"/>
    <property type="chains" value="y=1-46"/>
</dbReference>
<dbReference type="PDB" id="7NHQ">
    <property type="method" value="EM"/>
    <property type="resolution" value="2.68 A"/>
    <property type="chains" value="y=1-46"/>
</dbReference>
<dbReference type="PDB" id="7RF1">
    <property type="method" value="X-ray"/>
    <property type="resolution" value="1.89 A"/>
    <property type="chains" value="Y/y=1-46"/>
</dbReference>
<dbReference type="PDB" id="7RF2">
    <property type="method" value="X-ray"/>
    <property type="resolution" value="2.08 A"/>
    <property type="chains" value="Y/y=1-46"/>
</dbReference>
<dbReference type="PDB" id="7RF3">
    <property type="method" value="X-ray"/>
    <property type="resolution" value="2.26 A"/>
    <property type="chains" value="Y/y=1-46"/>
</dbReference>
<dbReference type="PDB" id="7RF4">
    <property type="method" value="X-ray"/>
    <property type="resolution" value="2.27 A"/>
    <property type="chains" value="Y/y=1-46"/>
</dbReference>
<dbReference type="PDB" id="7RF5">
    <property type="method" value="X-ray"/>
    <property type="resolution" value="2.23 A"/>
    <property type="chains" value="Y/y=1-46"/>
</dbReference>
<dbReference type="PDB" id="7RF6">
    <property type="method" value="X-ray"/>
    <property type="resolution" value="2.01 A"/>
    <property type="chains" value="Y/y=1-46"/>
</dbReference>
<dbReference type="PDB" id="7RF7">
    <property type="method" value="X-ray"/>
    <property type="resolution" value="2.09 A"/>
    <property type="chains" value="Y/y=1-46"/>
</dbReference>
<dbReference type="PDB" id="7RF8">
    <property type="method" value="X-ray"/>
    <property type="resolution" value="2.09 A"/>
    <property type="chains" value="Y/y=1-46"/>
</dbReference>
<dbReference type="PDB" id="7YQ2">
    <property type="method" value="X-ray"/>
    <property type="resolution" value="1.90 A"/>
    <property type="chains" value="Y/y=1-46"/>
</dbReference>
<dbReference type="PDB" id="7YQ7">
    <property type="method" value="X-ray"/>
    <property type="resolution" value="1.90 A"/>
    <property type="chains" value="Y/y=1-46"/>
</dbReference>
<dbReference type="PDB" id="8EZ5">
    <property type="method" value="X-ray"/>
    <property type="resolution" value="2.09 A"/>
    <property type="chains" value="Y/y=1-46"/>
</dbReference>
<dbReference type="PDB" id="8F4C">
    <property type="method" value="X-ray"/>
    <property type="resolution" value="2.00 A"/>
    <property type="chains" value="Y/y=1-46"/>
</dbReference>
<dbReference type="PDB" id="8F4D">
    <property type="method" value="X-ray"/>
    <property type="resolution" value="2.15 A"/>
    <property type="chains" value="Y/y=1-46"/>
</dbReference>
<dbReference type="PDB" id="8F4E">
    <property type="method" value="X-ray"/>
    <property type="resolution" value="2.09 A"/>
    <property type="chains" value="Y/y=1-46"/>
</dbReference>
<dbReference type="PDB" id="8F4F">
    <property type="method" value="X-ray"/>
    <property type="resolution" value="2.03 A"/>
    <property type="chains" value="Y/y=1-46"/>
</dbReference>
<dbReference type="PDB" id="8F4G">
    <property type="method" value="X-ray"/>
    <property type="resolution" value="2.03 A"/>
    <property type="chains" value="Y/y=1-46"/>
</dbReference>
<dbReference type="PDB" id="8F4H">
    <property type="method" value="X-ray"/>
    <property type="resolution" value="2.10 A"/>
    <property type="chains" value="Y/y=1-46"/>
</dbReference>
<dbReference type="PDB" id="8F4I">
    <property type="method" value="X-ray"/>
    <property type="resolution" value="2.00 A"/>
    <property type="chains" value="Y/y=1-46"/>
</dbReference>
<dbReference type="PDB" id="8F4J">
    <property type="method" value="X-ray"/>
    <property type="resolution" value="2.00 A"/>
    <property type="chains" value="Y/y=1-46"/>
</dbReference>
<dbReference type="PDB" id="8F4K">
    <property type="method" value="X-ray"/>
    <property type="resolution" value="2.16 A"/>
    <property type="chains" value="Y/y=1-46"/>
</dbReference>
<dbReference type="PDB" id="9EVX">
    <property type="method" value="EM"/>
    <property type="resolution" value="1.71 A"/>
    <property type="chains" value="Y/y=1-46"/>
</dbReference>
<dbReference type="PDBsum" id="3KZI"/>
<dbReference type="PDBsum" id="4FBY"/>
<dbReference type="PDBsum" id="4IXQ"/>
<dbReference type="PDBsum" id="4IXR"/>
<dbReference type="PDBsum" id="4PBU"/>
<dbReference type="PDBsum" id="4PJ0"/>
<dbReference type="PDBsum" id="4RVY"/>
<dbReference type="PDBsum" id="4TNH"/>
<dbReference type="PDBsum" id="4TNI"/>
<dbReference type="PDBsum" id="4TNJ"/>
<dbReference type="PDBsum" id="4TNK"/>
<dbReference type="PDBsum" id="4V62"/>
<dbReference type="PDBsum" id="4V82"/>
<dbReference type="PDBsum" id="5E79"/>
<dbReference type="PDBsum" id="5E7C"/>
<dbReference type="PDBsum" id="5H2F"/>
<dbReference type="PDBsum" id="5KAF"/>
<dbReference type="PDBsum" id="5KAI"/>
<dbReference type="PDBsum" id="5MX2"/>
<dbReference type="PDBsum" id="5TIS"/>
<dbReference type="PDBsum" id="5ZZN"/>
<dbReference type="PDBsum" id="6DHE"/>
<dbReference type="PDBsum" id="6DHF"/>
<dbReference type="PDBsum" id="6DHG"/>
<dbReference type="PDBsum" id="6DHH"/>
<dbReference type="PDBsum" id="6DHO"/>
<dbReference type="PDBsum" id="6DHP"/>
<dbReference type="PDBsum" id="6W1O"/>
<dbReference type="PDBsum" id="6W1P"/>
<dbReference type="PDBsum" id="6W1Q"/>
<dbReference type="PDBsum" id="6W1R"/>
<dbReference type="PDBsum" id="6W1T"/>
<dbReference type="PDBsum" id="6W1U"/>
<dbReference type="PDBsum" id="6W1V"/>
<dbReference type="PDBsum" id="7NHO"/>
<dbReference type="PDBsum" id="7NHP"/>
<dbReference type="PDBsum" id="7NHQ"/>
<dbReference type="PDBsum" id="7RF1"/>
<dbReference type="PDBsum" id="7RF2"/>
<dbReference type="PDBsum" id="7RF3"/>
<dbReference type="PDBsum" id="7RF4"/>
<dbReference type="PDBsum" id="7RF5"/>
<dbReference type="PDBsum" id="7RF6"/>
<dbReference type="PDBsum" id="7RF7"/>
<dbReference type="PDBsum" id="7RF8"/>
<dbReference type="PDBsum" id="7YQ2"/>
<dbReference type="PDBsum" id="7YQ7"/>
<dbReference type="PDBsum" id="8EZ5"/>
<dbReference type="PDBsum" id="8F4C"/>
<dbReference type="PDBsum" id="8F4D"/>
<dbReference type="PDBsum" id="8F4E"/>
<dbReference type="PDBsum" id="8F4F"/>
<dbReference type="PDBsum" id="8F4G"/>
<dbReference type="PDBsum" id="8F4H"/>
<dbReference type="PDBsum" id="8F4I"/>
<dbReference type="PDBsum" id="8F4J"/>
<dbReference type="PDBsum" id="8F4K"/>
<dbReference type="PDBsum" id="9EVX"/>
<dbReference type="EMDB" id="EMD-12335"/>
<dbReference type="EMDB" id="EMD-12336"/>
<dbReference type="EMDB" id="EMD-12337"/>
<dbReference type="EMDB" id="EMD-50019"/>
<dbReference type="SMR" id="Q8DJI1"/>
<dbReference type="DIP" id="DIP-48505N"/>
<dbReference type="IntAct" id="Q8DJI1">
    <property type="interactions" value="1"/>
</dbReference>
<dbReference type="STRING" id="197221.gene:10747838"/>
<dbReference type="EnsemblBacteria" id="BAC08794">
    <property type="protein sequence ID" value="BAC08794"/>
    <property type="gene ID" value="BAC08794"/>
</dbReference>
<dbReference type="KEGG" id="tel:tsr1242"/>
<dbReference type="EvolutionaryTrace" id="Q8DJI1"/>
<dbReference type="Proteomes" id="UP000000440">
    <property type="component" value="Chromosome"/>
</dbReference>
<dbReference type="GO" id="GO:0009523">
    <property type="term" value="C:photosystem II"/>
    <property type="evidence" value="ECO:0007669"/>
    <property type="project" value="UniProtKB-KW"/>
</dbReference>
<dbReference type="GO" id="GO:0031676">
    <property type="term" value="C:plasma membrane-derived thylakoid membrane"/>
    <property type="evidence" value="ECO:0007669"/>
    <property type="project" value="UniProtKB-SubCell"/>
</dbReference>
<dbReference type="GO" id="GO:0015979">
    <property type="term" value="P:photosynthesis"/>
    <property type="evidence" value="ECO:0007669"/>
    <property type="project" value="UniProtKB-KW"/>
</dbReference>
<dbReference type="HAMAP" id="MF_01329">
    <property type="entry name" value="PSII_Psb30_Ycf12"/>
    <property type="match status" value="1"/>
</dbReference>
<dbReference type="InterPro" id="IPR010284">
    <property type="entry name" value="PSII_Ycf12_core-subunit"/>
</dbReference>
<dbReference type="NCBIfam" id="NF010239">
    <property type="entry name" value="PRK13686.1"/>
    <property type="match status" value="1"/>
</dbReference>
<dbReference type="Pfam" id="PF05969">
    <property type="entry name" value="PSII_Ycf12"/>
    <property type="match status" value="1"/>
</dbReference>
<protein>
    <recommendedName>
        <fullName evidence="1 13">Photosystem II reaction center protein Psb30</fullName>
    </recommendedName>
    <alternativeName>
        <fullName evidence="1">Photosystem II reaction center protein Ycf12</fullName>
    </alternativeName>
</protein>
<evidence type="ECO:0000255" key="1">
    <source>
        <dbReference type="HAMAP-Rule" id="MF_01329"/>
    </source>
</evidence>
<evidence type="ECO:0000269" key="2">
    <source>
    </source>
</evidence>
<evidence type="ECO:0000269" key="3">
    <source>
    </source>
</evidence>
<evidence type="ECO:0000269" key="4">
    <source>
    </source>
</evidence>
<evidence type="ECO:0000269" key="5">
    <source>
    </source>
</evidence>
<evidence type="ECO:0000269" key="6">
    <source>
    </source>
</evidence>
<evidence type="ECO:0000269" key="7">
    <source>
    </source>
</evidence>
<evidence type="ECO:0000269" key="8">
    <source>
    </source>
</evidence>
<evidence type="ECO:0000269" key="9">
    <source>
    </source>
</evidence>
<evidence type="ECO:0000269" key="10">
    <source>
    </source>
</evidence>
<evidence type="ECO:0000269" key="11">
    <source>
    </source>
</evidence>
<evidence type="ECO:0000269" key="12">
    <source>
    </source>
</evidence>
<evidence type="ECO:0000303" key="13">
    <source>
    </source>
</evidence>
<evidence type="ECO:0007744" key="14">
    <source>
        <dbReference type="PDB" id="7NHO"/>
    </source>
</evidence>
<evidence type="ECO:0007744" key="15">
    <source>
        <dbReference type="PDB" id="7NHP"/>
    </source>
</evidence>
<evidence type="ECO:0007744" key="16">
    <source>
        <dbReference type="PDB" id="7NHQ"/>
    </source>
</evidence>
<evidence type="ECO:0007829" key="17">
    <source>
        <dbReference type="PDB" id="7YQ2"/>
    </source>
</evidence>
<feature type="chain" id="PRO_0000059043" description="Photosystem II reaction center protein Psb30">
    <location>
        <begin position="1"/>
        <end position="46"/>
    </location>
</feature>
<feature type="topological domain" description="Lumenal" evidence="12 16">
    <location>
        <begin position="1"/>
        <end position="20"/>
    </location>
</feature>
<feature type="transmembrane region" description="Helical" evidence="12 16">
    <location>
        <begin position="21"/>
        <end position="38"/>
    </location>
</feature>
<feature type="topological domain" description="Cytoplasmic" evidence="12 16">
    <location>
        <begin position="39"/>
        <end position="46"/>
    </location>
</feature>
<feature type="modified residue" description="N-formylmethionine" evidence="4 6">
    <location>
        <position position="1"/>
    </location>
</feature>
<feature type="helix" evidence="17">
    <location>
        <begin position="18"/>
        <end position="41"/>
    </location>
</feature>
<reference key="1">
    <citation type="journal article" date="2002" name="DNA Res.">
        <title>Complete genome structure of the thermophilic cyanobacterium Thermosynechococcus elongatus BP-1.</title>
        <authorList>
            <person name="Nakamura Y."/>
            <person name="Kaneko T."/>
            <person name="Sato S."/>
            <person name="Ikeuchi M."/>
            <person name="Katoh H."/>
            <person name="Sasamoto S."/>
            <person name="Watanabe A."/>
            <person name="Iriguchi M."/>
            <person name="Kawashima K."/>
            <person name="Kimura T."/>
            <person name="Kishida Y."/>
            <person name="Kiyokawa C."/>
            <person name="Kohara M."/>
            <person name="Matsumoto M."/>
            <person name="Matsuno A."/>
            <person name="Nakazaki N."/>
            <person name="Shimpo S."/>
            <person name="Sugimoto M."/>
            <person name="Takeuchi C."/>
            <person name="Yamada M."/>
            <person name="Tabata S."/>
        </authorList>
    </citation>
    <scope>NUCLEOTIDE SEQUENCE [LARGE SCALE GENOMIC DNA]</scope>
    <source>
        <strain>NIES-2133 / IAM M-273 / BP-1</strain>
    </source>
</reference>
<reference key="2">
    <citation type="journal article" date="2007" name="Biochim. Biophys. Acta">
        <title>Ycf12 is a core subunit in the photosystem II complex.</title>
        <authorList>
            <person name="Kashino Y."/>
            <person name="Takahashi T."/>
            <person name="Inoue-Kashino N."/>
            <person name="Ban A."/>
            <person name="Ikeda Y."/>
            <person name="Satoh K."/>
            <person name="Sugiura M."/>
        </authorList>
    </citation>
    <scope>PROTEIN SEQUENCE OF 1-15</scope>
    <scope>IDENTIFICATION IN PHOTOSYSTEM II</scope>
    <scope>COFACTOR</scope>
    <scope>SUBUNIT</scope>
    <scope>SUBCELLULAR LOCATION</scope>
</reference>
<reference key="3">
    <citation type="journal article" date="2007" name="Plant Cell Physiol.">
        <title>Absence of the PsbZ subunit prevents association of PsbK and Ycf12 with the PSII complex in the thermophilic cyanobacterium Thermosynechococcus elongatus BP-1.</title>
        <authorList>
            <person name="Iwai M."/>
            <person name="Suzuki T."/>
            <person name="Dohmae N."/>
            <person name="Inoue Y."/>
            <person name="Ikeuchi M."/>
        </authorList>
    </citation>
    <scope>PROTEIN SEQUENCE OF 1-6</scope>
    <scope>IDENTIFICATION IN PHOTOSYSTEM II</scope>
    <scope>COFACTOR</scope>
    <scope>SUBUNIT</scope>
    <scope>SUBCELLULAR LOCATION</scope>
</reference>
<reference key="4">
    <citation type="journal article" date="2010" name="Biochim. Biophys. Acta">
        <title>Psb30 contributes to structurally stabilise the Photosystem II complex in the thermophilic cyanobacterium Thermosynechococcus elongatus.</title>
        <authorList>
            <person name="Sugiura M."/>
            <person name="Harada S."/>
            <person name="Manabe T."/>
            <person name="Hayashi H."/>
            <person name="Kashino Y."/>
            <person name="Boussac A."/>
        </authorList>
    </citation>
    <scope>FUNCTION</scope>
    <scope>DISRUPTION PHENOTYPE</scope>
</reference>
<reference key="5">
    <citation type="journal article" date="2009" name="Nat. Struct. Mol. Biol.">
        <title>Cyanobacterial photosystem II at 2.9-A resolution and the role of quinones, lipids, channels and chloride.</title>
        <authorList>
            <person name="Guskov A."/>
            <person name="Kern J."/>
            <person name="Gabdulkhakov A."/>
            <person name="Broser M."/>
            <person name="Zouni A."/>
            <person name="Saenger W."/>
        </authorList>
    </citation>
    <scope>X-RAY CRYSTALLOGRAPHY (2.90 ANGSTROMS) IN PHOTOSYSTEM II</scope>
    <scope>COFACTOR</scope>
    <scope>SUBUNIT</scope>
    <scope>SUBCELLULAR LOCATION</scope>
    <scope>FORMYLATION AT MET-1</scope>
    <scope>MASS SPECTROMETRY</scope>
    <scope>TOPOLOGY</scope>
    <source>
        <strain>NIES-2133 / IAM M-273 / BP-1</strain>
    </source>
</reference>
<reference key="6">
    <citation type="journal article" date="2010" name="J. Biol. Chem.">
        <title>Crystal structure of monomeric photosystem II from Thermosynechococcus elongatus at 3.6 A resolution.</title>
        <authorList>
            <person name="Broser M."/>
            <person name="Gabdulkhakov A."/>
            <person name="Kern J."/>
            <person name="Guskov A."/>
            <person name="Muh F."/>
            <person name="Saenger W."/>
            <person name="Zouni A."/>
        </authorList>
    </citation>
    <scope>X-RAY CRYSTALLOGRAPHY (3.60 ANGSTROMS) IN PHOTOSYSTEM II</scope>
    <scope>FUNCTION</scope>
    <scope>COFACTOR</scope>
    <scope>SUBUNIT</scope>
    <scope>SUBCELLULAR LOCATION</scope>
    <scope>FORMYLATION AT MET-1</scope>
    <scope>MASS SPECTROMETRY</scope>
    <source>
        <strain>NIES-2133 / IAM M-273 / BP-1</strain>
    </source>
</reference>
<reference key="7">
    <citation type="journal article" date="2011" name="J. Biol. Chem.">
        <title>Structural basis of cyanobacterial photosystem II inhibition by the herbicide terbutryn.</title>
        <authorList>
            <person name="Broser M."/>
            <person name="Glockner C."/>
            <person name="Gabdulkhakov A."/>
            <person name="Guskov A."/>
            <person name="Buchta J."/>
            <person name="Kern J."/>
            <person name="Muh F."/>
            <person name="Dau H."/>
            <person name="Saenger W."/>
            <person name="Zouni A."/>
        </authorList>
    </citation>
    <scope>X-RAY CRYSTALLOGRAPHY (3.20 ANGSTROMS) IN PHOTOSYSTEM II</scope>
    <scope>FUNCTION</scope>
    <scope>COFACTOR</scope>
    <scope>SUBUNIT</scope>
    <scope>SUBCELLULAR LOCATION</scope>
</reference>
<reference key="8">
    <citation type="journal article" date="2012" name="Proc. Natl. Acad. Sci. U.S.A.">
        <title>Room temperature femtosecond X-ray diffraction of photosystem II microcrystals.</title>
        <authorList>
            <person name="Kern J."/>
            <person name="Alonso-Mori R."/>
            <person name="Hellmich J."/>
            <person name="Tran R."/>
            <person name="Hattne J."/>
            <person name="Laksmono H."/>
            <person name="Glockner C."/>
            <person name="Echols N."/>
            <person name="Sierra R.G."/>
            <person name="Sellberg J."/>
            <person name="Lassalle-Kaiser B."/>
            <person name="Gildea R.J."/>
            <person name="Glatzel P."/>
            <person name="Grosse-Kunstleve R.W."/>
            <person name="Latimer M.J."/>
            <person name="McQueen T.A."/>
            <person name="DiFiore D."/>
            <person name="Fry A.R."/>
            <person name="Messerschmidt M."/>
            <person name="Miahnahri A."/>
            <person name="Schafer D.W."/>
            <person name="Seibert M.M."/>
            <person name="Sokaras D."/>
            <person name="Weng T.C."/>
            <person name="Zwart P.H."/>
            <person name="White W.E."/>
            <person name="Adams P.D."/>
            <person name="Bogan M.J."/>
            <person name="Boutet S."/>
            <person name="Williams G.J."/>
            <person name="Messinger J."/>
            <person name="Sauter N.K."/>
            <person name="Zouni A."/>
            <person name="Bergmann U."/>
            <person name="Yano J."/>
            <person name="Yachandra V.K."/>
        </authorList>
    </citation>
    <scope>X-RAY CRYSTALLOGRAPHY (6.56 ANGSTROMS) IN PHOTOSYSTEM II</scope>
    <scope>COFACTOR</scope>
    <scope>SUBUNIT</scope>
    <scope>SUBCELLULAR LOCATION</scope>
    <source>
        <strain>NIES-2133 / IAM M-273 / BP-1</strain>
    </source>
</reference>
<reference key="9">
    <citation type="journal article" date="2013" name="Science">
        <title>Simultaneous femtosecond X-ray spectroscopy and diffraction of photosystem II at room temperature.</title>
        <authorList>
            <person name="Kern J."/>
            <person name="Alonso-Mori R."/>
            <person name="Tran R."/>
            <person name="Hattne J."/>
            <person name="Gildea R.J."/>
            <person name="Echols N."/>
            <person name="Glockner C."/>
            <person name="Hellmich J."/>
            <person name="Laksmono H."/>
            <person name="Sierra R.G."/>
            <person name="Lassalle-Kaiser B."/>
            <person name="Koroidov S."/>
            <person name="Lampe A."/>
            <person name="Han G."/>
            <person name="Gul S."/>
            <person name="Difiore D."/>
            <person name="Milathianaki D."/>
            <person name="Fry A.R."/>
            <person name="Miahnahri A."/>
            <person name="Schafer D.W."/>
            <person name="Messerschmidt M."/>
            <person name="Seibert M.M."/>
            <person name="Koglin J.E."/>
            <person name="Sokaras D."/>
            <person name="Weng T.C."/>
            <person name="Sellberg J."/>
            <person name="Latimer M.J."/>
            <person name="Grosse-Kunstleve R.W."/>
            <person name="Zwart P.H."/>
            <person name="White W.E."/>
            <person name="Glatzel P."/>
            <person name="Adams P.D."/>
            <person name="Bogan M.J."/>
            <person name="Williams G.J."/>
            <person name="Boutet S."/>
            <person name="Messinger J."/>
            <person name="Zouni A."/>
            <person name="Sauter N.K."/>
            <person name="Yachandra V.K."/>
            <person name="Bergmann U."/>
            <person name="Yano J."/>
        </authorList>
    </citation>
    <scope>X-RAY CRYSTALLOGRAPHY (5.70 ANGSTROMS) IN PHOTOSYSTEM II</scope>
    <scope>COFACTOR</scope>
    <scope>SUBUNIT</scope>
    <scope>SUBCELLULAR LOCATION</scope>
    <source>
        <strain>NIES-2133 / IAM M-273 / BP-1</strain>
    </source>
</reference>
<reference key="10">
    <citation type="journal article" date="2014" name="Nature">
        <title>Serial time-resolved crystallography of photosystem II using a femtosecond X-ray laser.</title>
        <authorList>
            <person name="Kupitz C."/>
            <person name="Basu S."/>
            <person name="Grotjohann I."/>
            <person name="Fromme R."/>
            <person name="Zatsepin N.A."/>
            <person name="Rendek K.N."/>
            <person name="Hunter M.S."/>
            <person name="Shoeman R.L."/>
            <person name="White T.A."/>
            <person name="Wang D."/>
            <person name="James D."/>
            <person name="Yang J.H."/>
            <person name="Cobb D.E."/>
            <person name="Reeder B."/>
            <person name="Sierra R.G."/>
            <person name="Liu H."/>
            <person name="Barty A."/>
            <person name="Aquila A.L."/>
            <person name="Deponte D."/>
            <person name="Kirian R.A."/>
            <person name="Bari S."/>
            <person name="Bergkamp J.J."/>
            <person name="Beyerlein K.R."/>
            <person name="Bogan M.J."/>
            <person name="Caleman C."/>
            <person name="Chao T.C."/>
            <person name="Conrad C.E."/>
            <person name="Davis K.M."/>
            <person name="Fleckenstein H."/>
            <person name="Galli L."/>
            <person name="Hau-Riege S.P."/>
            <person name="Kassemeyer S."/>
            <person name="Laksmono H."/>
            <person name="Liang M."/>
            <person name="Lomb L."/>
            <person name="Marchesini S."/>
            <person name="Martin A.V."/>
            <person name="Messerschmidt M."/>
            <person name="Milathianaki D."/>
            <person name="Nass K."/>
            <person name="Ros A."/>
            <person name="Roy-Chowdhury S."/>
            <person name="Schmidt K."/>
            <person name="Seibert M."/>
            <person name="Steinbrener J."/>
            <person name="Stellato F."/>
            <person name="Yan L."/>
            <person name="Yoon C."/>
            <person name="Moore T.A."/>
            <person name="Moore A.L."/>
            <person name="Pushkar Y."/>
            <person name="Williams G.J."/>
            <person name="Boutet S."/>
            <person name="Doak R.B."/>
            <person name="Weierstall U."/>
            <person name="Frank M."/>
            <person name="Chapman H.N."/>
            <person name="Spence J.C."/>
            <person name="Fromme P."/>
        </authorList>
    </citation>
    <scope>X-RAY CRYSTALLOGRAPHY (5.00 ANGSTROMS) OF 18-46 IN PHOTOSYSTEM II</scope>
    <scope>COFACTOR</scope>
    <scope>SUBUNIT</scope>
    <scope>SUBCELLULAR LOCATION</scope>
    <source>
        <strain>NIES-2133 / IAM M-273 / BP-1</strain>
    </source>
</reference>
<reference key="11">
    <citation type="journal article" date="2014" name="Nat. Commun.">
        <title>Taking snapshots of photosynthetic water oxidation using femtosecond X-ray diffraction and spectroscopy.</title>
        <authorList>
            <person name="Kern J."/>
            <person name="Tran R."/>
            <person name="Alonso-Mori R."/>
            <person name="Koroidov S."/>
            <person name="Echols N."/>
            <person name="Hattne J."/>
            <person name="Ibrahim M."/>
            <person name="Gul S."/>
            <person name="Laksmono H."/>
            <person name="Sierra R.G."/>
            <person name="Gildea R.J."/>
            <person name="Han G."/>
            <person name="Hellmich J."/>
            <person name="Lassalle-Kaiser B."/>
            <person name="Chatterjee R."/>
            <person name="Brewster A.S."/>
            <person name="Stan C.A."/>
            <person name="Gloeckner C."/>
            <person name="Lampe A."/>
            <person name="DiFiore D."/>
            <person name="Milathianaki D."/>
            <person name="Fry A.R."/>
            <person name="Seibert M.M."/>
            <person name="Koglin J.E."/>
            <person name="Gallo E."/>
            <person name="Uhlig J."/>
            <person name="Sokaras D."/>
            <person name="Weng T.C."/>
            <person name="Zwart P.H."/>
            <person name="Skinner D.E."/>
            <person name="Bogan M.J."/>
            <person name="Messerschmidt M."/>
            <person name="Glatzel P."/>
            <person name="Williams G.J."/>
            <person name="Boutet S."/>
            <person name="Adams P.D."/>
            <person name="Zouni A."/>
            <person name="Messinger J."/>
            <person name="Sauter N.K."/>
            <person name="Bergmann U."/>
            <person name="Yano J."/>
            <person name="Yachandra V.K."/>
        </authorList>
    </citation>
    <scope>X-RAY CRYSTALLOGRAPHY (4.50 ANGSTROMS) IN PHOTOSYSTEM II</scope>
    <scope>FUNCTION</scope>
    <scope>COFACTOR</scope>
    <scope>SUBUNIT</scope>
    <scope>SUBCELLULAR LOCATION</scope>
    <source>
        <strain>NIES-2133 / IAM M-273 / BP-1</strain>
    </source>
</reference>
<reference evidence="14 15 16" key="12">
    <citation type="journal article" date="2021" name="Nat. Plants">
        <title>Structural insights into photosystem II assembly.</title>
        <authorList>
            <person name="Zabret J."/>
            <person name="Bohn S."/>
            <person name="Schuller S.K."/>
            <person name="Arnolds O."/>
            <person name="Moller M."/>
            <person name="Meier-Credo J."/>
            <person name="Liauw P."/>
            <person name="Chan A."/>
            <person name="Tajkhorshid E."/>
            <person name="Langer J.D."/>
            <person name="Stoll R."/>
            <person name="Krieger-Liszkay A."/>
            <person name="Engel B.D."/>
            <person name="Rudack T."/>
            <person name="Schuller J.M."/>
            <person name="Nowaczyk M.M."/>
        </authorList>
    </citation>
    <scope>STRUCTURE BY ELECTRON MICROSCOPY (2.68 ANGSTROMS) IN PSII-I ASSEMBLY COMPLEX</scope>
    <scope>SUBUNIT</scope>
    <scope>SUBCELLULAR LOCATION</scope>
    <scope>TOPOLOGY</scope>
    <source>
        <strain>NIES-2133 / IAM M-273 / BP-1</strain>
    </source>
</reference>
<accession>Q8DJI1</accession>